<evidence type="ECO:0000255" key="1">
    <source>
        <dbReference type="HAMAP-Rule" id="MF_01633"/>
    </source>
</evidence>
<comment type="function">
    <text evidence="1">Catalyzes the ATP-dependent conversion of 7-carboxy-7-deazaguanine (CDG) to 7-cyano-7-deazaguanine (preQ(0)).</text>
</comment>
<comment type="catalytic activity">
    <reaction evidence="1">
        <text>7-carboxy-7-deazaguanine + NH4(+) + ATP = 7-cyano-7-deazaguanine + ADP + phosphate + H2O + H(+)</text>
        <dbReference type="Rhea" id="RHEA:27982"/>
        <dbReference type="ChEBI" id="CHEBI:15377"/>
        <dbReference type="ChEBI" id="CHEBI:15378"/>
        <dbReference type="ChEBI" id="CHEBI:28938"/>
        <dbReference type="ChEBI" id="CHEBI:30616"/>
        <dbReference type="ChEBI" id="CHEBI:43474"/>
        <dbReference type="ChEBI" id="CHEBI:45075"/>
        <dbReference type="ChEBI" id="CHEBI:61036"/>
        <dbReference type="ChEBI" id="CHEBI:456216"/>
        <dbReference type="EC" id="6.3.4.20"/>
    </reaction>
</comment>
<comment type="cofactor">
    <cofactor evidence="1">
        <name>Zn(2+)</name>
        <dbReference type="ChEBI" id="CHEBI:29105"/>
    </cofactor>
    <text evidence="1">Binds 1 zinc ion per subunit.</text>
</comment>
<comment type="pathway">
    <text evidence="1">Purine metabolism; 7-cyano-7-deazaguanine biosynthesis.</text>
</comment>
<comment type="similarity">
    <text evidence="1">Belongs to the QueC family.</text>
</comment>
<gene>
    <name evidence="1" type="primary">queC</name>
    <name type="ordered locus">BamMC406_3057</name>
</gene>
<organism>
    <name type="scientific">Burkholderia ambifaria (strain MC40-6)</name>
    <dbReference type="NCBI Taxonomy" id="398577"/>
    <lineage>
        <taxon>Bacteria</taxon>
        <taxon>Pseudomonadati</taxon>
        <taxon>Pseudomonadota</taxon>
        <taxon>Betaproteobacteria</taxon>
        <taxon>Burkholderiales</taxon>
        <taxon>Burkholderiaceae</taxon>
        <taxon>Burkholderia</taxon>
        <taxon>Burkholderia cepacia complex</taxon>
    </lineage>
</organism>
<name>QUEC_BURA4</name>
<dbReference type="EC" id="6.3.4.20" evidence="1"/>
<dbReference type="EMBL" id="CP001025">
    <property type="protein sequence ID" value="ACB65533.1"/>
    <property type="molecule type" value="Genomic_DNA"/>
</dbReference>
<dbReference type="RefSeq" id="WP_011658229.1">
    <property type="nucleotide sequence ID" value="NC_010551.1"/>
</dbReference>
<dbReference type="SMR" id="B1YPW9"/>
<dbReference type="GeneID" id="93084634"/>
<dbReference type="KEGG" id="bac:BamMC406_3057"/>
<dbReference type="HOGENOM" id="CLU_081854_0_0_4"/>
<dbReference type="OrthoDB" id="9789567at2"/>
<dbReference type="UniPathway" id="UPA00391"/>
<dbReference type="Proteomes" id="UP000001680">
    <property type="component" value="Chromosome 1"/>
</dbReference>
<dbReference type="GO" id="GO:0005524">
    <property type="term" value="F:ATP binding"/>
    <property type="evidence" value="ECO:0007669"/>
    <property type="project" value="UniProtKB-UniRule"/>
</dbReference>
<dbReference type="GO" id="GO:0016879">
    <property type="term" value="F:ligase activity, forming carbon-nitrogen bonds"/>
    <property type="evidence" value="ECO:0007669"/>
    <property type="project" value="UniProtKB-UniRule"/>
</dbReference>
<dbReference type="GO" id="GO:0008270">
    <property type="term" value="F:zinc ion binding"/>
    <property type="evidence" value="ECO:0007669"/>
    <property type="project" value="UniProtKB-UniRule"/>
</dbReference>
<dbReference type="GO" id="GO:0008616">
    <property type="term" value="P:queuosine biosynthetic process"/>
    <property type="evidence" value="ECO:0007669"/>
    <property type="project" value="UniProtKB-UniRule"/>
</dbReference>
<dbReference type="CDD" id="cd01995">
    <property type="entry name" value="QueC-like"/>
    <property type="match status" value="1"/>
</dbReference>
<dbReference type="Gene3D" id="3.40.50.620">
    <property type="entry name" value="HUPs"/>
    <property type="match status" value="1"/>
</dbReference>
<dbReference type="HAMAP" id="MF_01633">
    <property type="entry name" value="QueC"/>
    <property type="match status" value="1"/>
</dbReference>
<dbReference type="InterPro" id="IPR018317">
    <property type="entry name" value="QueC"/>
</dbReference>
<dbReference type="InterPro" id="IPR014729">
    <property type="entry name" value="Rossmann-like_a/b/a_fold"/>
</dbReference>
<dbReference type="NCBIfam" id="TIGR00364">
    <property type="entry name" value="7-cyano-7-deazaguanine synthase QueC"/>
    <property type="match status" value="1"/>
</dbReference>
<dbReference type="PANTHER" id="PTHR42914">
    <property type="entry name" value="7-CYANO-7-DEAZAGUANINE SYNTHASE"/>
    <property type="match status" value="1"/>
</dbReference>
<dbReference type="PANTHER" id="PTHR42914:SF1">
    <property type="entry name" value="7-CYANO-7-DEAZAGUANINE SYNTHASE"/>
    <property type="match status" value="1"/>
</dbReference>
<dbReference type="Pfam" id="PF06508">
    <property type="entry name" value="QueC"/>
    <property type="match status" value="1"/>
</dbReference>
<dbReference type="PIRSF" id="PIRSF006293">
    <property type="entry name" value="ExsB"/>
    <property type="match status" value="1"/>
</dbReference>
<dbReference type="SUPFAM" id="SSF52402">
    <property type="entry name" value="Adenine nucleotide alpha hydrolases-like"/>
    <property type="match status" value="1"/>
</dbReference>
<protein>
    <recommendedName>
        <fullName evidence="1">7-cyano-7-deazaguanine synthase</fullName>
        <ecNumber evidence="1">6.3.4.20</ecNumber>
    </recommendedName>
    <alternativeName>
        <fullName evidence="1">7-cyano-7-carbaguanine synthase</fullName>
    </alternativeName>
    <alternativeName>
        <fullName evidence="1">PreQ(0) synthase</fullName>
    </alternativeName>
    <alternativeName>
        <fullName evidence="1">Queuosine biosynthesis protein QueC</fullName>
    </alternativeName>
</protein>
<proteinExistence type="inferred from homology"/>
<accession>B1YPW9</accession>
<keyword id="KW-0067">ATP-binding</keyword>
<keyword id="KW-0436">Ligase</keyword>
<keyword id="KW-0479">Metal-binding</keyword>
<keyword id="KW-0547">Nucleotide-binding</keyword>
<keyword id="KW-0671">Queuosine biosynthesis</keyword>
<keyword id="KW-0862">Zinc</keyword>
<feature type="chain" id="PRO_1000186564" description="7-cyano-7-deazaguanine synthase">
    <location>
        <begin position="1"/>
        <end position="244"/>
    </location>
</feature>
<feature type="binding site" evidence="1">
    <location>
        <begin position="14"/>
        <end position="24"/>
    </location>
    <ligand>
        <name>ATP</name>
        <dbReference type="ChEBI" id="CHEBI:30616"/>
    </ligand>
</feature>
<feature type="binding site" evidence="1">
    <location>
        <position position="202"/>
    </location>
    <ligand>
        <name>Zn(2+)</name>
        <dbReference type="ChEBI" id="CHEBI:29105"/>
    </ligand>
</feature>
<feature type="binding site" evidence="1">
    <location>
        <position position="217"/>
    </location>
    <ligand>
        <name>Zn(2+)</name>
        <dbReference type="ChEBI" id="CHEBI:29105"/>
    </ligand>
</feature>
<feature type="binding site" evidence="1">
    <location>
        <position position="220"/>
    </location>
    <ligand>
        <name>Zn(2+)</name>
        <dbReference type="ChEBI" id="CHEBI:29105"/>
    </ligand>
</feature>
<feature type="binding site" evidence="1">
    <location>
        <position position="223"/>
    </location>
    <ligand>
        <name>Zn(2+)</name>
        <dbReference type="ChEBI" id="CHEBI:29105"/>
    </ligand>
</feature>
<sequence>MIRTDAKDGALVLFSGGQDSATCVAWALERYQTVETLGFDYGQRHRVELECREGVRDALKHRFPAWAGRLGDDHMIDLSVLGAISDTAMTRTIEIETTANGLPNTFVPGRNLLFMTIAAAIAYRRGLRVLVGGMCETDFSGYPDCRDDTMKALQVALNLGMDTRIVLETPLMWLDKAQTWQLAEQLGGDALVELIRVETHTCYVGERAELHDWGFGCGECPACKLRKRGYEAYLKGERVTEAPL</sequence>
<reference key="1">
    <citation type="submission" date="2008-04" db="EMBL/GenBank/DDBJ databases">
        <title>Complete sequence of chromosome 1 of Burkholderia ambifaria MC40-6.</title>
        <authorList>
            <person name="Copeland A."/>
            <person name="Lucas S."/>
            <person name="Lapidus A."/>
            <person name="Glavina del Rio T."/>
            <person name="Dalin E."/>
            <person name="Tice H."/>
            <person name="Pitluck S."/>
            <person name="Chain P."/>
            <person name="Malfatti S."/>
            <person name="Shin M."/>
            <person name="Vergez L."/>
            <person name="Lang D."/>
            <person name="Schmutz J."/>
            <person name="Larimer F."/>
            <person name="Land M."/>
            <person name="Hauser L."/>
            <person name="Kyrpides N."/>
            <person name="Lykidis A."/>
            <person name="Ramette A."/>
            <person name="Konstantinidis K."/>
            <person name="Tiedje J."/>
            <person name="Richardson P."/>
        </authorList>
    </citation>
    <scope>NUCLEOTIDE SEQUENCE [LARGE SCALE GENOMIC DNA]</scope>
    <source>
        <strain>MC40-6</strain>
    </source>
</reference>